<reference key="1">
    <citation type="journal article" date="2007" name="J. Bacteriol.">
        <title>The complete genome sequence of Roseobacter denitrificans reveals a mixotrophic rather than photosynthetic metabolism.</title>
        <authorList>
            <person name="Swingley W.D."/>
            <person name="Sadekar S."/>
            <person name="Mastrian S.D."/>
            <person name="Matthies H.J."/>
            <person name="Hao J."/>
            <person name="Ramos H."/>
            <person name="Acharya C.R."/>
            <person name="Conrad A.L."/>
            <person name="Taylor H.L."/>
            <person name="Dejesa L.C."/>
            <person name="Shah M.K."/>
            <person name="O'Huallachain M.E."/>
            <person name="Lince M.T."/>
            <person name="Blankenship R.E."/>
            <person name="Beatty J.T."/>
            <person name="Touchman J.W."/>
        </authorList>
    </citation>
    <scope>NUCLEOTIDE SEQUENCE [LARGE SCALE GENOMIC DNA]</scope>
    <source>
        <strain>ATCC 33942 / OCh 114</strain>
    </source>
</reference>
<accession>Q163E9</accession>
<protein>
    <recommendedName>
        <fullName evidence="1">4-diphosphocytidyl-2-C-methyl-D-erythritol kinase</fullName>
        <shortName evidence="1">CMK</shortName>
        <ecNumber evidence="1">2.7.1.148</ecNumber>
    </recommendedName>
    <alternativeName>
        <fullName evidence="1">4-(cytidine-5'-diphospho)-2-C-methyl-D-erythritol kinase</fullName>
    </alternativeName>
</protein>
<name>ISPE_ROSDO</name>
<gene>
    <name evidence="1" type="primary">ispE</name>
    <name type="ordered locus">RD1_3402</name>
</gene>
<keyword id="KW-0067">ATP-binding</keyword>
<keyword id="KW-0414">Isoprene biosynthesis</keyword>
<keyword id="KW-0418">Kinase</keyword>
<keyword id="KW-0547">Nucleotide-binding</keyword>
<keyword id="KW-1185">Reference proteome</keyword>
<keyword id="KW-0808">Transferase</keyword>
<dbReference type="EC" id="2.7.1.148" evidence="1"/>
<dbReference type="EMBL" id="CP000362">
    <property type="protein sequence ID" value="ABG32894.1"/>
    <property type="molecule type" value="Genomic_DNA"/>
</dbReference>
<dbReference type="RefSeq" id="WP_011569509.1">
    <property type="nucleotide sequence ID" value="NC_008209.1"/>
</dbReference>
<dbReference type="SMR" id="Q163E9"/>
<dbReference type="STRING" id="375451.RD1_3402"/>
<dbReference type="KEGG" id="rde:RD1_3402"/>
<dbReference type="eggNOG" id="COG1947">
    <property type="taxonomic scope" value="Bacteria"/>
</dbReference>
<dbReference type="HOGENOM" id="CLU_053057_1_0_5"/>
<dbReference type="OrthoDB" id="9809438at2"/>
<dbReference type="UniPathway" id="UPA00056">
    <property type="reaction ID" value="UER00094"/>
</dbReference>
<dbReference type="Proteomes" id="UP000007029">
    <property type="component" value="Chromosome"/>
</dbReference>
<dbReference type="GO" id="GO:0050515">
    <property type="term" value="F:4-(cytidine 5'-diphospho)-2-C-methyl-D-erythritol kinase activity"/>
    <property type="evidence" value="ECO:0007669"/>
    <property type="project" value="UniProtKB-UniRule"/>
</dbReference>
<dbReference type="GO" id="GO:0005524">
    <property type="term" value="F:ATP binding"/>
    <property type="evidence" value="ECO:0007669"/>
    <property type="project" value="UniProtKB-UniRule"/>
</dbReference>
<dbReference type="GO" id="GO:0019288">
    <property type="term" value="P:isopentenyl diphosphate biosynthetic process, methylerythritol 4-phosphate pathway"/>
    <property type="evidence" value="ECO:0007669"/>
    <property type="project" value="UniProtKB-UniRule"/>
</dbReference>
<dbReference type="GO" id="GO:0016114">
    <property type="term" value="P:terpenoid biosynthetic process"/>
    <property type="evidence" value="ECO:0007669"/>
    <property type="project" value="InterPro"/>
</dbReference>
<dbReference type="Gene3D" id="3.30.230.10">
    <property type="match status" value="1"/>
</dbReference>
<dbReference type="Gene3D" id="3.30.70.890">
    <property type="entry name" value="GHMP kinase, C-terminal domain"/>
    <property type="match status" value="1"/>
</dbReference>
<dbReference type="HAMAP" id="MF_00061">
    <property type="entry name" value="IspE"/>
    <property type="match status" value="1"/>
</dbReference>
<dbReference type="InterPro" id="IPR013750">
    <property type="entry name" value="GHMP_kinase_C_dom"/>
</dbReference>
<dbReference type="InterPro" id="IPR036554">
    <property type="entry name" value="GHMP_kinase_C_sf"/>
</dbReference>
<dbReference type="InterPro" id="IPR006204">
    <property type="entry name" value="GHMP_kinase_N_dom"/>
</dbReference>
<dbReference type="InterPro" id="IPR004424">
    <property type="entry name" value="IspE"/>
</dbReference>
<dbReference type="InterPro" id="IPR020568">
    <property type="entry name" value="Ribosomal_Su5_D2-typ_SF"/>
</dbReference>
<dbReference type="InterPro" id="IPR014721">
    <property type="entry name" value="Ribsml_uS5_D2-typ_fold_subgr"/>
</dbReference>
<dbReference type="NCBIfam" id="TIGR00154">
    <property type="entry name" value="ispE"/>
    <property type="match status" value="1"/>
</dbReference>
<dbReference type="NCBIfam" id="NF011202">
    <property type="entry name" value="PRK14608.1"/>
    <property type="match status" value="1"/>
</dbReference>
<dbReference type="PANTHER" id="PTHR43527">
    <property type="entry name" value="4-DIPHOSPHOCYTIDYL-2-C-METHYL-D-ERYTHRITOL KINASE, CHLOROPLASTIC"/>
    <property type="match status" value="1"/>
</dbReference>
<dbReference type="PANTHER" id="PTHR43527:SF2">
    <property type="entry name" value="4-DIPHOSPHOCYTIDYL-2-C-METHYL-D-ERYTHRITOL KINASE, CHLOROPLASTIC"/>
    <property type="match status" value="1"/>
</dbReference>
<dbReference type="Pfam" id="PF08544">
    <property type="entry name" value="GHMP_kinases_C"/>
    <property type="match status" value="1"/>
</dbReference>
<dbReference type="Pfam" id="PF00288">
    <property type="entry name" value="GHMP_kinases_N"/>
    <property type="match status" value="1"/>
</dbReference>
<dbReference type="PIRSF" id="PIRSF010376">
    <property type="entry name" value="IspE"/>
    <property type="match status" value="1"/>
</dbReference>
<dbReference type="SUPFAM" id="SSF55060">
    <property type="entry name" value="GHMP Kinase, C-terminal domain"/>
    <property type="match status" value="1"/>
</dbReference>
<dbReference type="SUPFAM" id="SSF54211">
    <property type="entry name" value="Ribosomal protein S5 domain 2-like"/>
    <property type="match status" value="1"/>
</dbReference>
<sequence length="299" mass="31848">MSMPVPQVVEVFAPAKINLTLHVTGQRPDGYHLLDSLVAFADVGDVLRLEPADVWQMKTVGPEAEAVPDGAENLVLKAAALLDGAPKAAFTLTKNLPVASGIGGGSADAAAAFRGLCAATPHHDPNNIDTQRRLLSLGADIPMCLHCVTARITGIGEEITPVAQFPALHAVLINPRVAVSTPAVFKAMKQRNNPPMPDIPPESCDVKDLVEWLRAQRNDMQEAATTLEPAIATVQAALEGHRACQLARMSGSGATCFGLFHTAQAAQQAARDLSRDYPQWWIRPTQLGSQAERAVPRLS</sequence>
<comment type="function">
    <text evidence="1">Catalyzes the phosphorylation of the position 2 hydroxy group of 4-diphosphocytidyl-2C-methyl-D-erythritol.</text>
</comment>
<comment type="catalytic activity">
    <reaction evidence="1">
        <text>4-CDP-2-C-methyl-D-erythritol + ATP = 4-CDP-2-C-methyl-D-erythritol 2-phosphate + ADP + H(+)</text>
        <dbReference type="Rhea" id="RHEA:18437"/>
        <dbReference type="ChEBI" id="CHEBI:15378"/>
        <dbReference type="ChEBI" id="CHEBI:30616"/>
        <dbReference type="ChEBI" id="CHEBI:57823"/>
        <dbReference type="ChEBI" id="CHEBI:57919"/>
        <dbReference type="ChEBI" id="CHEBI:456216"/>
        <dbReference type="EC" id="2.7.1.148"/>
    </reaction>
</comment>
<comment type="pathway">
    <text evidence="1">Isoprenoid biosynthesis; isopentenyl diphosphate biosynthesis via DXP pathway; isopentenyl diphosphate from 1-deoxy-D-xylulose 5-phosphate: step 3/6.</text>
</comment>
<comment type="similarity">
    <text evidence="1">Belongs to the GHMP kinase family. IspE subfamily.</text>
</comment>
<evidence type="ECO:0000255" key="1">
    <source>
        <dbReference type="HAMAP-Rule" id="MF_00061"/>
    </source>
</evidence>
<organism>
    <name type="scientific">Roseobacter denitrificans (strain ATCC 33942 / OCh 114)</name>
    <name type="common">Erythrobacter sp. (strain OCh 114)</name>
    <name type="synonym">Roseobacter denitrificans</name>
    <dbReference type="NCBI Taxonomy" id="375451"/>
    <lineage>
        <taxon>Bacteria</taxon>
        <taxon>Pseudomonadati</taxon>
        <taxon>Pseudomonadota</taxon>
        <taxon>Alphaproteobacteria</taxon>
        <taxon>Rhodobacterales</taxon>
        <taxon>Roseobacteraceae</taxon>
        <taxon>Roseobacter</taxon>
    </lineage>
</organism>
<feature type="chain" id="PRO_0000335750" description="4-diphosphocytidyl-2-C-methyl-D-erythritol kinase">
    <location>
        <begin position="1"/>
        <end position="299"/>
    </location>
</feature>
<feature type="active site" evidence="1">
    <location>
        <position position="16"/>
    </location>
</feature>
<feature type="active site" evidence="1">
    <location>
        <position position="140"/>
    </location>
</feature>
<feature type="binding site" evidence="1">
    <location>
        <begin position="97"/>
        <end position="107"/>
    </location>
    <ligand>
        <name>ATP</name>
        <dbReference type="ChEBI" id="CHEBI:30616"/>
    </ligand>
</feature>
<proteinExistence type="inferred from homology"/>